<accession>B9VXI8</accession>
<evidence type="ECO:0000305" key="1"/>
<reference key="1">
    <citation type="journal article" date="2004" name="J. Gen. Virol.">
        <title>Genetic content of wild-type human cytomegalovirus.</title>
        <authorList>
            <person name="Dolan A."/>
            <person name="Cunningham C."/>
            <person name="Hector R.D."/>
            <person name="Hassan-Walker A.F."/>
            <person name="Lee L."/>
            <person name="Addison C."/>
            <person name="Dargan D.J."/>
            <person name="McGeoch D.J."/>
            <person name="Gatherer D."/>
            <person name="Emery V.C."/>
            <person name="Griffiths P.D."/>
            <person name="Sinzger C."/>
            <person name="McSharry B.P."/>
            <person name="Wilkinson G.W.G."/>
            <person name="Davison A.J."/>
        </authorList>
    </citation>
    <scope>NUCLEOTIDE SEQUENCE [LARGE SCALE GENOMIC DNA]</scope>
</reference>
<proteinExistence type="inferred from homology"/>
<feature type="chain" id="PRO_0000417842" description="Protein UL17">
    <location>
        <begin position="1"/>
        <end position="104"/>
    </location>
</feature>
<comment type="similarity">
    <text evidence="1">Belongs to the HHV-5 UL17 protein family.</text>
</comment>
<sequence>MDHALFTHFVGRPRHCRLEMLILDEQVSKRSWDTTVYHRRRRHLPRRRAPCGPQRPAEIPKRRKKAAVLLFWHDLCWLFRRLFFPREDSEPLMSDPARSPEEEE</sequence>
<dbReference type="EMBL" id="FJ616285">
    <property type="protein sequence ID" value="ACM48007.1"/>
    <property type="molecule type" value="Genomic_DNA"/>
</dbReference>
<dbReference type="Proteomes" id="UP000006907">
    <property type="component" value="Segment"/>
</dbReference>
<dbReference type="InterPro" id="IPR020527">
    <property type="entry name" value="Cytomegalovir_UL17"/>
</dbReference>
<dbReference type="Pfam" id="PF17640">
    <property type="entry name" value="UL17"/>
    <property type="match status" value="1"/>
</dbReference>
<organismHost>
    <name type="scientific">Homo sapiens</name>
    <name type="common">Human</name>
    <dbReference type="NCBI Taxonomy" id="9606"/>
</organismHost>
<organism>
    <name type="scientific">Human cytomegalovirus (strain Towne)</name>
    <name type="common">HHV-5</name>
    <name type="synonym">Human herpesvirus 5</name>
    <dbReference type="NCBI Taxonomy" id="10363"/>
    <lineage>
        <taxon>Viruses</taxon>
        <taxon>Duplodnaviria</taxon>
        <taxon>Heunggongvirae</taxon>
        <taxon>Peploviricota</taxon>
        <taxon>Herviviricetes</taxon>
        <taxon>Herpesvirales</taxon>
        <taxon>Orthoherpesviridae</taxon>
        <taxon>Betaherpesvirinae</taxon>
        <taxon>Cytomegalovirus</taxon>
        <taxon>Cytomegalovirus humanbeta5</taxon>
        <taxon>Human cytomegalovirus</taxon>
    </lineage>
</organism>
<protein>
    <recommendedName>
        <fullName>Protein UL17</fullName>
    </recommendedName>
</protein>
<name>UL17_HCMVT</name>
<gene>
    <name type="primary">UL17</name>
</gene>